<feature type="chain" id="PRO_1000203619" description="Thymidylate kinase">
    <location>
        <begin position="1"/>
        <end position="210"/>
    </location>
</feature>
<feature type="binding site" evidence="1">
    <location>
        <begin position="10"/>
        <end position="17"/>
    </location>
    <ligand>
        <name>ATP</name>
        <dbReference type="ChEBI" id="CHEBI:30616"/>
    </ligand>
</feature>
<proteinExistence type="inferred from homology"/>
<keyword id="KW-0067">ATP-binding</keyword>
<keyword id="KW-0418">Kinase</keyword>
<keyword id="KW-0545">Nucleotide biosynthesis</keyword>
<keyword id="KW-0547">Nucleotide-binding</keyword>
<keyword id="KW-0808">Transferase</keyword>
<accession>C4K3R2</accession>
<evidence type="ECO:0000255" key="1">
    <source>
        <dbReference type="HAMAP-Rule" id="MF_00165"/>
    </source>
</evidence>
<name>KTHY_HAMD5</name>
<protein>
    <recommendedName>
        <fullName evidence="1">Thymidylate kinase</fullName>
        <ecNumber evidence="1">2.7.4.9</ecNumber>
    </recommendedName>
    <alternativeName>
        <fullName evidence="1">dTMP kinase</fullName>
    </alternativeName>
</protein>
<gene>
    <name evidence="1" type="primary">tmk</name>
    <name type="ordered locus">HDEF_0451</name>
</gene>
<reference key="1">
    <citation type="journal article" date="2009" name="Proc. Natl. Acad. Sci. U.S.A.">
        <title>Hamiltonella defensa, genome evolution of protective bacterial endosymbiont from pathogenic ancestors.</title>
        <authorList>
            <person name="Degnan P.H."/>
            <person name="Yu Y."/>
            <person name="Sisneros N."/>
            <person name="Wing R.A."/>
            <person name="Moran N.A."/>
        </authorList>
    </citation>
    <scope>NUCLEOTIDE SEQUENCE [LARGE SCALE GENOMIC DNA]</scope>
    <source>
        <strain>5AT</strain>
    </source>
</reference>
<sequence>MKGKFIVIEGLEGAGKSTAVNTVQQFLRHFKIQDVICTREPGGTALSEEIRHLIKKKSQNEEILTDKAELLLLYAARVQLLENIIKPALSSGTWVIGDRHDLSSQAYQGGGRGIKSEFIKSLADFTLGSSFRPDLTLYLDLPPELGLQRARKRGHLDRIEQQSLVFFERIRARYLELTYDDPRIKMIDASKPIKKVTVDIQNALLSLLEK</sequence>
<organism>
    <name type="scientific">Hamiltonella defensa subsp. Acyrthosiphon pisum (strain 5AT)</name>
    <dbReference type="NCBI Taxonomy" id="572265"/>
    <lineage>
        <taxon>Bacteria</taxon>
        <taxon>Pseudomonadati</taxon>
        <taxon>Pseudomonadota</taxon>
        <taxon>Gammaproteobacteria</taxon>
        <taxon>Enterobacterales</taxon>
        <taxon>Enterobacteriaceae</taxon>
        <taxon>aphid secondary symbionts</taxon>
        <taxon>Candidatus Hamiltonella</taxon>
    </lineage>
</organism>
<comment type="function">
    <text evidence="1">Phosphorylation of dTMP to form dTDP in both de novo and salvage pathways of dTTP synthesis.</text>
</comment>
<comment type="catalytic activity">
    <reaction evidence="1">
        <text>dTMP + ATP = dTDP + ADP</text>
        <dbReference type="Rhea" id="RHEA:13517"/>
        <dbReference type="ChEBI" id="CHEBI:30616"/>
        <dbReference type="ChEBI" id="CHEBI:58369"/>
        <dbReference type="ChEBI" id="CHEBI:63528"/>
        <dbReference type="ChEBI" id="CHEBI:456216"/>
        <dbReference type="EC" id="2.7.4.9"/>
    </reaction>
</comment>
<comment type="similarity">
    <text evidence="1">Belongs to the thymidylate kinase family.</text>
</comment>
<dbReference type="EC" id="2.7.4.9" evidence="1"/>
<dbReference type="EMBL" id="CP001277">
    <property type="protein sequence ID" value="ACQ67205.1"/>
    <property type="molecule type" value="Genomic_DNA"/>
</dbReference>
<dbReference type="RefSeq" id="WP_012738162.1">
    <property type="nucleotide sequence ID" value="NC_012751.1"/>
</dbReference>
<dbReference type="SMR" id="C4K3R2"/>
<dbReference type="STRING" id="572265.HDEF_0451"/>
<dbReference type="GeneID" id="66260346"/>
<dbReference type="KEGG" id="hde:HDEF_0451"/>
<dbReference type="eggNOG" id="COG0125">
    <property type="taxonomic scope" value="Bacteria"/>
</dbReference>
<dbReference type="HOGENOM" id="CLU_049131_0_1_6"/>
<dbReference type="Proteomes" id="UP000002334">
    <property type="component" value="Chromosome"/>
</dbReference>
<dbReference type="GO" id="GO:0005829">
    <property type="term" value="C:cytosol"/>
    <property type="evidence" value="ECO:0007669"/>
    <property type="project" value="TreeGrafter"/>
</dbReference>
<dbReference type="GO" id="GO:0005524">
    <property type="term" value="F:ATP binding"/>
    <property type="evidence" value="ECO:0007669"/>
    <property type="project" value="UniProtKB-UniRule"/>
</dbReference>
<dbReference type="GO" id="GO:0004798">
    <property type="term" value="F:dTMP kinase activity"/>
    <property type="evidence" value="ECO:0007669"/>
    <property type="project" value="UniProtKB-UniRule"/>
</dbReference>
<dbReference type="GO" id="GO:0006233">
    <property type="term" value="P:dTDP biosynthetic process"/>
    <property type="evidence" value="ECO:0007669"/>
    <property type="project" value="InterPro"/>
</dbReference>
<dbReference type="GO" id="GO:0006235">
    <property type="term" value="P:dTTP biosynthetic process"/>
    <property type="evidence" value="ECO:0007669"/>
    <property type="project" value="UniProtKB-UniRule"/>
</dbReference>
<dbReference type="GO" id="GO:0006227">
    <property type="term" value="P:dUDP biosynthetic process"/>
    <property type="evidence" value="ECO:0007669"/>
    <property type="project" value="TreeGrafter"/>
</dbReference>
<dbReference type="CDD" id="cd01672">
    <property type="entry name" value="TMPK"/>
    <property type="match status" value="1"/>
</dbReference>
<dbReference type="FunFam" id="3.40.50.300:FF:000321">
    <property type="entry name" value="Thymidylate kinase"/>
    <property type="match status" value="1"/>
</dbReference>
<dbReference type="Gene3D" id="3.40.50.300">
    <property type="entry name" value="P-loop containing nucleotide triphosphate hydrolases"/>
    <property type="match status" value="1"/>
</dbReference>
<dbReference type="HAMAP" id="MF_00165">
    <property type="entry name" value="Thymidylate_kinase"/>
    <property type="match status" value="1"/>
</dbReference>
<dbReference type="InterPro" id="IPR027417">
    <property type="entry name" value="P-loop_NTPase"/>
</dbReference>
<dbReference type="InterPro" id="IPR039430">
    <property type="entry name" value="Thymidylate_kin-like_dom"/>
</dbReference>
<dbReference type="InterPro" id="IPR018095">
    <property type="entry name" value="Thymidylate_kin_CS"/>
</dbReference>
<dbReference type="InterPro" id="IPR018094">
    <property type="entry name" value="Thymidylate_kinase"/>
</dbReference>
<dbReference type="NCBIfam" id="TIGR00041">
    <property type="entry name" value="DTMP_kinase"/>
    <property type="match status" value="1"/>
</dbReference>
<dbReference type="PANTHER" id="PTHR10344">
    <property type="entry name" value="THYMIDYLATE KINASE"/>
    <property type="match status" value="1"/>
</dbReference>
<dbReference type="PANTHER" id="PTHR10344:SF4">
    <property type="entry name" value="UMP-CMP KINASE 2, MITOCHONDRIAL"/>
    <property type="match status" value="1"/>
</dbReference>
<dbReference type="Pfam" id="PF02223">
    <property type="entry name" value="Thymidylate_kin"/>
    <property type="match status" value="1"/>
</dbReference>
<dbReference type="SUPFAM" id="SSF52540">
    <property type="entry name" value="P-loop containing nucleoside triphosphate hydrolases"/>
    <property type="match status" value="1"/>
</dbReference>
<dbReference type="PROSITE" id="PS01331">
    <property type="entry name" value="THYMIDYLATE_KINASE"/>
    <property type="match status" value="1"/>
</dbReference>